<comment type="function">
    <text evidence="1">Catalyzes the ATP- as well as the pyrophosphate-dependent phosphorylation of a specific serine residue in HPr, a phosphocarrier protein of the phosphoenolpyruvate-dependent sugar phosphotransferase system (PTS). HprK/P also catalyzes the pyrophosphate-producing, inorganic phosphate-dependent dephosphorylation (phosphorolysis) of seryl-phosphorylated HPr (P-Ser-HPr).</text>
</comment>
<comment type="catalytic activity">
    <reaction evidence="1">
        <text>[HPr protein]-L-serine + ATP = [HPr protein]-O-phospho-L-serine + ADP + H(+)</text>
        <dbReference type="Rhea" id="RHEA:46600"/>
        <dbReference type="Rhea" id="RHEA-COMP:11602"/>
        <dbReference type="Rhea" id="RHEA-COMP:11603"/>
        <dbReference type="ChEBI" id="CHEBI:15378"/>
        <dbReference type="ChEBI" id="CHEBI:29999"/>
        <dbReference type="ChEBI" id="CHEBI:30616"/>
        <dbReference type="ChEBI" id="CHEBI:83421"/>
        <dbReference type="ChEBI" id="CHEBI:456216"/>
    </reaction>
</comment>
<comment type="catalytic activity">
    <reaction evidence="1">
        <text>[HPr protein]-O-phospho-L-serine + phosphate + H(+) = [HPr protein]-L-serine + diphosphate</text>
        <dbReference type="Rhea" id="RHEA:46604"/>
        <dbReference type="Rhea" id="RHEA-COMP:11602"/>
        <dbReference type="Rhea" id="RHEA-COMP:11603"/>
        <dbReference type="ChEBI" id="CHEBI:15378"/>
        <dbReference type="ChEBI" id="CHEBI:29999"/>
        <dbReference type="ChEBI" id="CHEBI:33019"/>
        <dbReference type="ChEBI" id="CHEBI:43474"/>
        <dbReference type="ChEBI" id="CHEBI:83421"/>
    </reaction>
</comment>
<comment type="cofactor">
    <cofactor evidence="1">
        <name>Mg(2+)</name>
        <dbReference type="ChEBI" id="CHEBI:18420"/>
    </cofactor>
</comment>
<comment type="subunit">
    <text evidence="1">Homohexamer.</text>
</comment>
<comment type="domain">
    <text evidence="1">The Walker A ATP-binding motif also binds Pi and PPi.</text>
</comment>
<comment type="miscellaneous">
    <text evidence="1">Both phosphorylation and phosphorolysis are carried out by the same active site and suggest a common mechanism for both reactions.</text>
</comment>
<comment type="similarity">
    <text evidence="1">Belongs to the HPrK/P family.</text>
</comment>
<keyword id="KW-0067">ATP-binding</keyword>
<keyword id="KW-0418">Kinase</keyword>
<keyword id="KW-0460">Magnesium</keyword>
<keyword id="KW-0479">Metal-binding</keyword>
<keyword id="KW-0511">Multifunctional enzyme</keyword>
<keyword id="KW-0547">Nucleotide-binding</keyword>
<keyword id="KW-0723">Serine/threonine-protein kinase</keyword>
<keyword id="KW-0808">Transferase</keyword>
<name>HPRK_XANC8</name>
<sequence>MNTSITARELFDQQRDKLALRWVAGQKGEHREIQAGSNNARRPSLAGYLNVIYPNKVQILGTEELAWLDSLDARQRWETIEKIIQVQPLALAISKNQSCPEDLRAAADESNTPLWISPKRGHELLNHLSYHLARTLAPRVTLHGVFMEIYSIGVLITGEAGSGKSELALELLSRGHRLVADDAPEFTQIAPDVLDGTCPELLQDLLEVRGLGVLNVRDMFGDTAVKKNKYLRLIVHLTRPMTEPTPSGYERLTGDSGSRHVLDLDVPLITLPVMPGRNLAVLTEAATRLHILRTKGIDPAAMFIARHSNLLERRTP</sequence>
<feature type="chain" id="PRO_1000067183" description="HPr kinase/phosphorylase">
    <location>
        <begin position="1"/>
        <end position="316"/>
    </location>
</feature>
<feature type="region of interest" description="Important for the catalytic mechanism of both phosphorylation and dephosphorylation" evidence="1">
    <location>
        <begin position="206"/>
        <end position="215"/>
    </location>
</feature>
<feature type="region of interest" description="Important for the catalytic mechanism of dephosphorylation" evidence="1">
    <location>
        <begin position="272"/>
        <end position="277"/>
    </location>
</feature>
<feature type="active site" evidence="1">
    <location>
        <position position="143"/>
    </location>
</feature>
<feature type="active site" evidence="1">
    <location>
        <position position="164"/>
    </location>
</feature>
<feature type="active site" description="Proton acceptor; for phosphorylation activity. Proton donor; for dephosphorylation activity" evidence="1">
    <location>
        <position position="182"/>
    </location>
</feature>
<feature type="active site" evidence="1">
    <location>
        <position position="251"/>
    </location>
</feature>
<feature type="binding site" evidence="1">
    <location>
        <begin position="158"/>
        <end position="165"/>
    </location>
    <ligand>
        <name>ATP</name>
        <dbReference type="ChEBI" id="CHEBI:30616"/>
    </ligand>
</feature>
<feature type="binding site" evidence="1">
    <location>
        <position position="165"/>
    </location>
    <ligand>
        <name>Mg(2+)</name>
        <dbReference type="ChEBI" id="CHEBI:18420"/>
    </ligand>
</feature>
<feature type="binding site" evidence="1">
    <location>
        <position position="207"/>
    </location>
    <ligand>
        <name>Mg(2+)</name>
        <dbReference type="ChEBI" id="CHEBI:18420"/>
    </ligand>
</feature>
<dbReference type="EC" id="2.7.11.-" evidence="1"/>
<dbReference type="EC" id="2.7.4.-" evidence="1"/>
<dbReference type="EMBL" id="CP000050">
    <property type="protein sequence ID" value="AAY48377.1"/>
    <property type="molecule type" value="Genomic_DNA"/>
</dbReference>
<dbReference type="RefSeq" id="WP_005993219.1">
    <property type="nucleotide sequence ID" value="NZ_CP155948.1"/>
</dbReference>
<dbReference type="SMR" id="Q4UX46"/>
<dbReference type="GeneID" id="97212397"/>
<dbReference type="KEGG" id="xcb:XC_1308"/>
<dbReference type="HOGENOM" id="CLU_052030_0_2_6"/>
<dbReference type="PHI-base" id="PHI:11054"/>
<dbReference type="Proteomes" id="UP000000420">
    <property type="component" value="Chromosome"/>
</dbReference>
<dbReference type="GO" id="GO:0005524">
    <property type="term" value="F:ATP binding"/>
    <property type="evidence" value="ECO:0007669"/>
    <property type="project" value="UniProtKB-UniRule"/>
</dbReference>
<dbReference type="GO" id="GO:0000287">
    <property type="term" value="F:magnesium ion binding"/>
    <property type="evidence" value="ECO:0007669"/>
    <property type="project" value="UniProtKB-UniRule"/>
</dbReference>
<dbReference type="GO" id="GO:0000155">
    <property type="term" value="F:phosphorelay sensor kinase activity"/>
    <property type="evidence" value="ECO:0007669"/>
    <property type="project" value="InterPro"/>
</dbReference>
<dbReference type="GO" id="GO:0004674">
    <property type="term" value="F:protein serine/threonine kinase activity"/>
    <property type="evidence" value="ECO:0007669"/>
    <property type="project" value="UniProtKB-KW"/>
</dbReference>
<dbReference type="GO" id="GO:0004712">
    <property type="term" value="F:protein serine/threonine/tyrosine kinase activity"/>
    <property type="evidence" value="ECO:0007669"/>
    <property type="project" value="UniProtKB-UniRule"/>
</dbReference>
<dbReference type="GO" id="GO:0006109">
    <property type="term" value="P:regulation of carbohydrate metabolic process"/>
    <property type="evidence" value="ECO:0007669"/>
    <property type="project" value="UniProtKB-UniRule"/>
</dbReference>
<dbReference type="CDD" id="cd01918">
    <property type="entry name" value="HprK_C"/>
    <property type="match status" value="1"/>
</dbReference>
<dbReference type="FunFam" id="3.40.50.300:FF:000174">
    <property type="entry name" value="HPr kinase/phosphorylase"/>
    <property type="match status" value="1"/>
</dbReference>
<dbReference type="Gene3D" id="3.40.1390.20">
    <property type="entry name" value="HprK N-terminal domain-like"/>
    <property type="match status" value="1"/>
</dbReference>
<dbReference type="Gene3D" id="3.40.50.300">
    <property type="entry name" value="P-loop containing nucleotide triphosphate hydrolases"/>
    <property type="match status" value="1"/>
</dbReference>
<dbReference type="HAMAP" id="MF_01249">
    <property type="entry name" value="HPr_kinase"/>
    <property type="match status" value="1"/>
</dbReference>
<dbReference type="InterPro" id="IPR003755">
    <property type="entry name" value="HPr(Ser)_kin/Pase"/>
</dbReference>
<dbReference type="InterPro" id="IPR011104">
    <property type="entry name" value="Hpr_kin/Pase_C"/>
</dbReference>
<dbReference type="InterPro" id="IPR011126">
    <property type="entry name" value="Hpr_kin/Pase_Hpr_N"/>
</dbReference>
<dbReference type="InterPro" id="IPR027417">
    <property type="entry name" value="P-loop_NTPase"/>
</dbReference>
<dbReference type="InterPro" id="IPR028979">
    <property type="entry name" value="Ser_kin/Pase_Hpr-like_N_sf"/>
</dbReference>
<dbReference type="NCBIfam" id="TIGR00679">
    <property type="entry name" value="hpr-ser"/>
    <property type="match status" value="1"/>
</dbReference>
<dbReference type="PANTHER" id="PTHR30305:SF1">
    <property type="entry name" value="HPR KINASE_PHOSPHORYLASE"/>
    <property type="match status" value="1"/>
</dbReference>
<dbReference type="PANTHER" id="PTHR30305">
    <property type="entry name" value="PROTEIN YJDM-RELATED"/>
    <property type="match status" value="1"/>
</dbReference>
<dbReference type="Pfam" id="PF07475">
    <property type="entry name" value="Hpr_kinase_C"/>
    <property type="match status" value="1"/>
</dbReference>
<dbReference type="Pfam" id="PF02603">
    <property type="entry name" value="Hpr_kinase_N"/>
    <property type="match status" value="1"/>
</dbReference>
<dbReference type="SUPFAM" id="SSF75138">
    <property type="entry name" value="HprK N-terminal domain-like"/>
    <property type="match status" value="1"/>
</dbReference>
<dbReference type="SUPFAM" id="SSF53795">
    <property type="entry name" value="PEP carboxykinase-like"/>
    <property type="match status" value="1"/>
</dbReference>
<accession>Q4UX46</accession>
<evidence type="ECO:0000255" key="1">
    <source>
        <dbReference type="HAMAP-Rule" id="MF_01249"/>
    </source>
</evidence>
<reference key="1">
    <citation type="journal article" date="2005" name="Genome Res.">
        <title>Comparative and functional genomic analyses of the pathogenicity of phytopathogen Xanthomonas campestris pv. campestris.</title>
        <authorList>
            <person name="Qian W."/>
            <person name="Jia Y."/>
            <person name="Ren S.-X."/>
            <person name="He Y.-Q."/>
            <person name="Feng J.-X."/>
            <person name="Lu L.-F."/>
            <person name="Sun Q."/>
            <person name="Ying G."/>
            <person name="Tang D.-J."/>
            <person name="Tang H."/>
            <person name="Wu W."/>
            <person name="Hao P."/>
            <person name="Wang L."/>
            <person name="Jiang B.-L."/>
            <person name="Zeng S."/>
            <person name="Gu W.-Y."/>
            <person name="Lu G."/>
            <person name="Rong L."/>
            <person name="Tian Y."/>
            <person name="Yao Z."/>
            <person name="Fu G."/>
            <person name="Chen B."/>
            <person name="Fang R."/>
            <person name="Qiang B."/>
            <person name="Chen Z."/>
            <person name="Zhao G.-P."/>
            <person name="Tang J.-L."/>
            <person name="He C."/>
        </authorList>
    </citation>
    <scope>NUCLEOTIDE SEQUENCE [LARGE SCALE GENOMIC DNA]</scope>
    <source>
        <strain>8004</strain>
    </source>
</reference>
<protein>
    <recommendedName>
        <fullName evidence="1">HPr kinase/phosphorylase</fullName>
        <shortName evidence="1">HPrK/P</shortName>
        <ecNumber evidence="1">2.7.11.-</ecNumber>
        <ecNumber evidence="1">2.7.4.-</ecNumber>
    </recommendedName>
    <alternativeName>
        <fullName evidence="1">HPr(Ser) kinase/phosphorylase</fullName>
    </alternativeName>
</protein>
<gene>
    <name evidence="1" type="primary">hprK</name>
    <name type="ordered locus">XC_1308</name>
</gene>
<organism>
    <name type="scientific">Xanthomonas campestris pv. campestris (strain 8004)</name>
    <dbReference type="NCBI Taxonomy" id="314565"/>
    <lineage>
        <taxon>Bacteria</taxon>
        <taxon>Pseudomonadati</taxon>
        <taxon>Pseudomonadota</taxon>
        <taxon>Gammaproteobacteria</taxon>
        <taxon>Lysobacterales</taxon>
        <taxon>Lysobacteraceae</taxon>
        <taxon>Xanthomonas</taxon>
    </lineage>
</organism>
<proteinExistence type="inferred from homology"/>